<name>GREA_BRUAB</name>
<sequence>MEKFPMTPRGFEKLKEELRWRQQSERPRIIEAIAEARAHGDLSENAEYHAAKEAQSLNEGRINELEDLVARAEVIDVSKLTGDRIKFGATVTMIDEDTEEEKIYQIVGDQEADVKEGRISISSPIARALIGKGEGDTIEVNAPGGSRSYEIIALKFV</sequence>
<gene>
    <name evidence="1" type="primary">greA</name>
    <name type="ordered locus">BruAb1_1497</name>
</gene>
<keyword id="KW-0238">DNA-binding</keyword>
<keyword id="KW-0804">Transcription</keyword>
<keyword id="KW-0805">Transcription regulation</keyword>
<reference key="1">
    <citation type="journal article" date="2005" name="J. Bacteriol.">
        <title>Completion of the genome sequence of Brucella abortus and comparison to the highly similar genomes of Brucella melitensis and Brucella suis.</title>
        <authorList>
            <person name="Halling S.M."/>
            <person name="Peterson-Burch B.D."/>
            <person name="Bricker B.J."/>
            <person name="Zuerner R.L."/>
            <person name="Qing Z."/>
            <person name="Li L.-L."/>
            <person name="Kapur V."/>
            <person name="Alt D.P."/>
            <person name="Olsen S.C."/>
        </authorList>
    </citation>
    <scope>NUCLEOTIDE SEQUENCE [LARGE SCALE GENOMIC DNA]</scope>
    <source>
        <strain>9-941</strain>
    </source>
</reference>
<dbReference type="EMBL" id="AE017223">
    <property type="protein sequence ID" value="AAX74825.1"/>
    <property type="molecule type" value="Genomic_DNA"/>
</dbReference>
<dbReference type="RefSeq" id="WP_002964610.1">
    <property type="nucleotide sequence ID" value="NC_006932.1"/>
</dbReference>
<dbReference type="SMR" id="Q57C09"/>
<dbReference type="EnsemblBacteria" id="AAX74825">
    <property type="protein sequence ID" value="AAX74825"/>
    <property type="gene ID" value="BruAb1_1497"/>
</dbReference>
<dbReference type="GeneID" id="93016210"/>
<dbReference type="KEGG" id="bmb:BruAb1_1497"/>
<dbReference type="HOGENOM" id="CLU_101379_2_0_5"/>
<dbReference type="Proteomes" id="UP000000540">
    <property type="component" value="Chromosome I"/>
</dbReference>
<dbReference type="GO" id="GO:0003677">
    <property type="term" value="F:DNA binding"/>
    <property type="evidence" value="ECO:0007669"/>
    <property type="project" value="UniProtKB-UniRule"/>
</dbReference>
<dbReference type="GO" id="GO:0070063">
    <property type="term" value="F:RNA polymerase binding"/>
    <property type="evidence" value="ECO:0007669"/>
    <property type="project" value="InterPro"/>
</dbReference>
<dbReference type="GO" id="GO:0006354">
    <property type="term" value="P:DNA-templated transcription elongation"/>
    <property type="evidence" value="ECO:0007669"/>
    <property type="project" value="TreeGrafter"/>
</dbReference>
<dbReference type="GO" id="GO:0032784">
    <property type="term" value="P:regulation of DNA-templated transcription elongation"/>
    <property type="evidence" value="ECO:0007669"/>
    <property type="project" value="UniProtKB-UniRule"/>
</dbReference>
<dbReference type="FunFam" id="1.10.287.180:FF:000001">
    <property type="entry name" value="Transcription elongation factor GreA"/>
    <property type="match status" value="1"/>
</dbReference>
<dbReference type="FunFam" id="3.10.50.30:FF:000001">
    <property type="entry name" value="Transcription elongation factor GreA"/>
    <property type="match status" value="1"/>
</dbReference>
<dbReference type="Gene3D" id="3.10.50.30">
    <property type="entry name" value="Transcription elongation factor, GreA/GreB, C-terminal domain"/>
    <property type="match status" value="1"/>
</dbReference>
<dbReference type="Gene3D" id="1.10.287.180">
    <property type="entry name" value="Transcription elongation factor, GreA/GreB, N-terminal domain"/>
    <property type="match status" value="1"/>
</dbReference>
<dbReference type="HAMAP" id="MF_00105">
    <property type="entry name" value="GreA_GreB"/>
    <property type="match status" value="1"/>
</dbReference>
<dbReference type="InterPro" id="IPR036953">
    <property type="entry name" value="GreA/GreB_C_sf"/>
</dbReference>
<dbReference type="InterPro" id="IPR018151">
    <property type="entry name" value="TF_GreA/GreB_CS"/>
</dbReference>
<dbReference type="InterPro" id="IPR006359">
    <property type="entry name" value="Tscrpt_elong_fac_GreA"/>
</dbReference>
<dbReference type="InterPro" id="IPR028624">
    <property type="entry name" value="Tscrpt_elong_fac_GreA/B"/>
</dbReference>
<dbReference type="InterPro" id="IPR001437">
    <property type="entry name" value="Tscrpt_elong_fac_GreA/B_C"/>
</dbReference>
<dbReference type="InterPro" id="IPR023459">
    <property type="entry name" value="Tscrpt_elong_fac_GreA/B_fam"/>
</dbReference>
<dbReference type="InterPro" id="IPR022691">
    <property type="entry name" value="Tscrpt_elong_fac_GreA/B_N"/>
</dbReference>
<dbReference type="InterPro" id="IPR036805">
    <property type="entry name" value="Tscrpt_elong_fac_GreA/B_N_sf"/>
</dbReference>
<dbReference type="NCBIfam" id="TIGR01462">
    <property type="entry name" value="greA"/>
    <property type="match status" value="1"/>
</dbReference>
<dbReference type="NCBIfam" id="NF001261">
    <property type="entry name" value="PRK00226.1-2"/>
    <property type="match status" value="1"/>
</dbReference>
<dbReference type="NCBIfam" id="NF001263">
    <property type="entry name" value="PRK00226.1-4"/>
    <property type="match status" value="1"/>
</dbReference>
<dbReference type="NCBIfam" id="NF001264">
    <property type="entry name" value="PRK00226.1-5"/>
    <property type="match status" value="1"/>
</dbReference>
<dbReference type="PANTHER" id="PTHR30437">
    <property type="entry name" value="TRANSCRIPTION ELONGATION FACTOR GREA"/>
    <property type="match status" value="1"/>
</dbReference>
<dbReference type="PANTHER" id="PTHR30437:SF4">
    <property type="entry name" value="TRANSCRIPTION ELONGATION FACTOR GREA"/>
    <property type="match status" value="1"/>
</dbReference>
<dbReference type="Pfam" id="PF01272">
    <property type="entry name" value="GreA_GreB"/>
    <property type="match status" value="1"/>
</dbReference>
<dbReference type="Pfam" id="PF03449">
    <property type="entry name" value="GreA_GreB_N"/>
    <property type="match status" value="1"/>
</dbReference>
<dbReference type="PIRSF" id="PIRSF006092">
    <property type="entry name" value="GreA_GreB"/>
    <property type="match status" value="1"/>
</dbReference>
<dbReference type="SUPFAM" id="SSF54534">
    <property type="entry name" value="FKBP-like"/>
    <property type="match status" value="1"/>
</dbReference>
<dbReference type="SUPFAM" id="SSF46557">
    <property type="entry name" value="GreA transcript cleavage protein, N-terminal domain"/>
    <property type="match status" value="1"/>
</dbReference>
<dbReference type="PROSITE" id="PS00829">
    <property type="entry name" value="GREAB_1"/>
    <property type="match status" value="1"/>
</dbReference>
<dbReference type="PROSITE" id="PS00830">
    <property type="entry name" value="GREAB_2"/>
    <property type="match status" value="1"/>
</dbReference>
<evidence type="ECO:0000255" key="1">
    <source>
        <dbReference type="HAMAP-Rule" id="MF_00105"/>
    </source>
</evidence>
<feature type="chain" id="PRO_1000075866" description="Transcription elongation factor GreA">
    <location>
        <begin position="1"/>
        <end position="157"/>
    </location>
</feature>
<accession>Q57C09</accession>
<organism>
    <name type="scientific">Brucella abortus biovar 1 (strain 9-941)</name>
    <dbReference type="NCBI Taxonomy" id="262698"/>
    <lineage>
        <taxon>Bacteria</taxon>
        <taxon>Pseudomonadati</taxon>
        <taxon>Pseudomonadota</taxon>
        <taxon>Alphaproteobacteria</taxon>
        <taxon>Hyphomicrobiales</taxon>
        <taxon>Brucellaceae</taxon>
        <taxon>Brucella/Ochrobactrum group</taxon>
        <taxon>Brucella</taxon>
    </lineage>
</organism>
<proteinExistence type="inferred from homology"/>
<protein>
    <recommendedName>
        <fullName evidence="1">Transcription elongation factor GreA</fullName>
    </recommendedName>
    <alternativeName>
        <fullName evidence="1">Transcript cleavage factor GreA</fullName>
    </alternativeName>
</protein>
<comment type="function">
    <text evidence="1">Necessary for efficient RNA polymerase transcription elongation past template-encoded arresting sites. The arresting sites in DNA have the property of trapping a certain fraction of elongating RNA polymerases that pass through, resulting in locked ternary complexes. Cleavage of the nascent transcript by cleavage factors such as GreA or GreB allows the resumption of elongation from the new 3'terminus. GreA releases sequences of 2 to 3 nucleotides.</text>
</comment>
<comment type="similarity">
    <text evidence="1">Belongs to the GreA/GreB family.</text>
</comment>